<sequence length="104" mass="11834">MATKQKIRIRLKAFDYKLIDQSAAEIVDTAKRTGAIVKGPVPLPTRMKRFDILRSPHVNKTSRDQLEIRTHQRLMDIVDPTDKTVDALMKLDLPAGVDVEIKLQ</sequence>
<organism>
    <name type="scientific">Polaromonas sp. (strain JS666 / ATCC BAA-500)</name>
    <dbReference type="NCBI Taxonomy" id="296591"/>
    <lineage>
        <taxon>Bacteria</taxon>
        <taxon>Pseudomonadati</taxon>
        <taxon>Pseudomonadota</taxon>
        <taxon>Betaproteobacteria</taxon>
        <taxon>Burkholderiales</taxon>
        <taxon>Comamonadaceae</taxon>
        <taxon>Polaromonas</taxon>
    </lineage>
</organism>
<proteinExistence type="inferred from homology"/>
<gene>
    <name evidence="1" type="primary">rpsJ</name>
    <name type="ordered locus">Bpro_0255</name>
</gene>
<dbReference type="EMBL" id="CP000316">
    <property type="protein sequence ID" value="ABE42220.1"/>
    <property type="molecule type" value="Genomic_DNA"/>
</dbReference>
<dbReference type="RefSeq" id="WP_007838118.1">
    <property type="nucleotide sequence ID" value="NZ_FNHX01000007.1"/>
</dbReference>
<dbReference type="SMR" id="Q12GX2"/>
<dbReference type="STRING" id="296591.Bpro_0255"/>
<dbReference type="GeneID" id="86906989"/>
<dbReference type="KEGG" id="pol:Bpro_0255"/>
<dbReference type="eggNOG" id="COG0051">
    <property type="taxonomic scope" value="Bacteria"/>
</dbReference>
<dbReference type="HOGENOM" id="CLU_122625_1_3_4"/>
<dbReference type="OrthoDB" id="9804464at2"/>
<dbReference type="Proteomes" id="UP000001983">
    <property type="component" value="Chromosome"/>
</dbReference>
<dbReference type="GO" id="GO:1990904">
    <property type="term" value="C:ribonucleoprotein complex"/>
    <property type="evidence" value="ECO:0007669"/>
    <property type="project" value="UniProtKB-KW"/>
</dbReference>
<dbReference type="GO" id="GO:0005840">
    <property type="term" value="C:ribosome"/>
    <property type="evidence" value="ECO:0007669"/>
    <property type="project" value="UniProtKB-KW"/>
</dbReference>
<dbReference type="GO" id="GO:0003735">
    <property type="term" value="F:structural constituent of ribosome"/>
    <property type="evidence" value="ECO:0007669"/>
    <property type="project" value="InterPro"/>
</dbReference>
<dbReference type="GO" id="GO:0000049">
    <property type="term" value="F:tRNA binding"/>
    <property type="evidence" value="ECO:0007669"/>
    <property type="project" value="UniProtKB-UniRule"/>
</dbReference>
<dbReference type="GO" id="GO:0006412">
    <property type="term" value="P:translation"/>
    <property type="evidence" value="ECO:0007669"/>
    <property type="project" value="UniProtKB-UniRule"/>
</dbReference>
<dbReference type="FunFam" id="3.30.70.600:FF:000001">
    <property type="entry name" value="30S ribosomal protein S10"/>
    <property type="match status" value="1"/>
</dbReference>
<dbReference type="Gene3D" id="3.30.70.600">
    <property type="entry name" value="Ribosomal protein S10 domain"/>
    <property type="match status" value="1"/>
</dbReference>
<dbReference type="HAMAP" id="MF_00508">
    <property type="entry name" value="Ribosomal_uS10"/>
    <property type="match status" value="1"/>
</dbReference>
<dbReference type="InterPro" id="IPR001848">
    <property type="entry name" value="Ribosomal_uS10"/>
</dbReference>
<dbReference type="InterPro" id="IPR018268">
    <property type="entry name" value="Ribosomal_uS10_CS"/>
</dbReference>
<dbReference type="InterPro" id="IPR027486">
    <property type="entry name" value="Ribosomal_uS10_dom"/>
</dbReference>
<dbReference type="InterPro" id="IPR036838">
    <property type="entry name" value="Ribosomal_uS10_dom_sf"/>
</dbReference>
<dbReference type="NCBIfam" id="NF001861">
    <property type="entry name" value="PRK00596.1"/>
    <property type="match status" value="1"/>
</dbReference>
<dbReference type="NCBIfam" id="TIGR01049">
    <property type="entry name" value="rpsJ_bact"/>
    <property type="match status" value="1"/>
</dbReference>
<dbReference type="PANTHER" id="PTHR11700">
    <property type="entry name" value="30S RIBOSOMAL PROTEIN S10 FAMILY MEMBER"/>
    <property type="match status" value="1"/>
</dbReference>
<dbReference type="Pfam" id="PF00338">
    <property type="entry name" value="Ribosomal_S10"/>
    <property type="match status" value="1"/>
</dbReference>
<dbReference type="PRINTS" id="PR00971">
    <property type="entry name" value="RIBOSOMALS10"/>
</dbReference>
<dbReference type="SMART" id="SM01403">
    <property type="entry name" value="Ribosomal_S10"/>
    <property type="match status" value="1"/>
</dbReference>
<dbReference type="SUPFAM" id="SSF54999">
    <property type="entry name" value="Ribosomal protein S10"/>
    <property type="match status" value="1"/>
</dbReference>
<dbReference type="PROSITE" id="PS00361">
    <property type="entry name" value="RIBOSOMAL_S10"/>
    <property type="match status" value="1"/>
</dbReference>
<comment type="function">
    <text evidence="1">Involved in the binding of tRNA to the ribosomes.</text>
</comment>
<comment type="subunit">
    <text evidence="1">Part of the 30S ribosomal subunit.</text>
</comment>
<comment type="similarity">
    <text evidence="1">Belongs to the universal ribosomal protein uS10 family.</text>
</comment>
<keyword id="KW-1185">Reference proteome</keyword>
<keyword id="KW-0687">Ribonucleoprotein</keyword>
<keyword id="KW-0689">Ribosomal protein</keyword>
<evidence type="ECO:0000255" key="1">
    <source>
        <dbReference type="HAMAP-Rule" id="MF_00508"/>
    </source>
</evidence>
<evidence type="ECO:0000305" key="2"/>
<feature type="chain" id="PRO_0000258560" description="Small ribosomal subunit protein uS10">
    <location>
        <begin position="1"/>
        <end position="104"/>
    </location>
</feature>
<name>RS10_POLSJ</name>
<protein>
    <recommendedName>
        <fullName evidence="1">Small ribosomal subunit protein uS10</fullName>
    </recommendedName>
    <alternativeName>
        <fullName evidence="2">30S ribosomal protein S10</fullName>
    </alternativeName>
</protein>
<reference key="1">
    <citation type="journal article" date="2008" name="Appl. Environ. Microbiol.">
        <title>The genome of Polaromonas sp. strain JS666: insights into the evolution of a hydrocarbon- and xenobiotic-degrading bacterium, and features of relevance to biotechnology.</title>
        <authorList>
            <person name="Mattes T.E."/>
            <person name="Alexander A.K."/>
            <person name="Richardson P.M."/>
            <person name="Munk A.C."/>
            <person name="Han C.S."/>
            <person name="Stothard P."/>
            <person name="Coleman N.V."/>
        </authorList>
    </citation>
    <scope>NUCLEOTIDE SEQUENCE [LARGE SCALE GENOMIC DNA]</scope>
    <source>
        <strain>JS666 / ATCC BAA-500</strain>
    </source>
</reference>
<accession>Q12GX2</accession>